<sequence length="211" mass="23113">MLTIALSKGRILDDTLPLLAEAGIVPTENPDKSRKLIIPTTQDDVRLLIVRATDVPTYVEHGAADLGVAGKDVLMEYGGQGLYEPLDLRIALCKLMTAGRVGDVEPKGRLRVATKFVNVAKRYYAEQGRQVDIIKLYGSMELAPLIGLADKIIDVVDTGNTLRANGLEPQDFIADISSRLIVNKASMKMQHARIQALIDTLRKAVESRHRG</sequence>
<name>HIS1_PSEFS</name>
<keyword id="KW-0028">Amino-acid biosynthesis</keyword>
<keyword id="KW-0067">ATP-binding</keyword>
<keyword id="KW-0963">Cytoplasm</keyword>
<keyword id="KW-0328">Glycosyltransferase</keyword>
<keyword id="KW-0368">Histidine biosynthesis</keyword>
<keyword id="KW-0547">Nucleotide-binding</keyword>
<keyword id="KW-0808">Transferase</keyword>
<gene>
    <name evidence="1" type="primary">hisG</name>
    <name type="ordered locus">PFLU_0895</name>
</gene>
<proteinExistence type="inferred from homology"/>
<comment type="function">
    <text evidence="1">Catalyzes the condensation of ATP and 5-phosphoribose 1-diphosphate to form N'-(5'-phosphoribosyl)-ATP (PR-ATP). Has a crucial role in the pathway because the rate of histidine biosynthesis seems to be controlled primarily by regulation of HisG enzymatic activity.</text>
</comment>
<comment type="catalytic activity">
    <reaction evidence="1">
        <text>1-(5-phospho-beta-D-ribosyl)-ATP + diphosphate = 5-phospho-alpha-D-ribose 1-diphosphate + ATP</text>
        <dbReference type="Rhea" id="RHEA:18473"/>
        <dbReference type="ChEBI" id="CHEBI:30616"/>
        <dbReference type="ChEBI" id="CHEBI:33019"/>
        <dbReference type="ChEBI" id="CHEBI:58017"/>
        <dbReference type="ChEBI" id="CHEBI:73183"/>
        <dbReference type="EC" id="2.4.2.17"/>
    </reaction>
</comment>
<comment type="pathway">
    <text evidence="1">Amino-acid biosynthesis; L-histidine biosynthesis; L-histidine from 5-phospho-alpha-D-ribose 1-diphosphate: step 1/9.</text>
</comment>
<comment type="subunit">
    <text evidence="1">Heteromultimer composed of HisG and HisZ subunits.</text>
</comment>
<comment type="subcellular location">
    <subcellularLocation>
        <location evidence="1">Cytoplasm</location>
    </subcellularLocation>
</comment>
<comment type="domain">
    <text>Lacks the C-terminal regulatory region which is replaced by HisZ.</text>
</comment>
<comment type="similarity">
    <text evidence="1">Belongs to the ATP phosphoribosyltransferase family. Short subfamily.</text>
</comment>
<feature type="chain" id="PRO_1000213275" description="ATP phosphoribosyltransferase">
    <location>
        <begin position="1"/>
        <end position="211"/>
    </location>
</feature>
<organism>
    <name type="scientific">Pseudomonas fluorescens (strain SBW25)</name>
    <dbReference type="NCBI Taxonomy" id="216595"/>
    <lineage>
        <taxon>Bacteria</taxon>
        <taxon>Pseudomonadati</taxon>
        <taxon>Pseudomonadota</taxon>
        <taxon>Gammaproteobacteria</taxon>
        <taxon>Pseudomonadales</taxon>
        <taxon>Pseudomonadaceae</taxon>
        <taxon>Pseudomonas</taxon>
    </lineage>
</organism>
<accession>C3K8X5</accession>
<dbReference type="EC" id="2.4.2.17" evidence="1"/>
<dbReference type="EMBL" id="AM181176">
    <property type="protein sequence ID" value="CAY47162.1"/>
    <property type="molecule type" value="Genomic_DNA"/>
</dbReference>
<dbReference type="RefSeq" id="WP_003188599.1">
    <property type="nucleotide sequence ID" value="NC_012660.1"/>
</dbReference>
<dbReference type="SMR" id="C3K8X5"/>
<dbReference type="STRING" id="294.SRM1_00917"/>
<dbReference type="GeneID" id="97923494"/>
<dbReference type="eggNOG" id="COG0040">
    <property type="taxonomic scope" value="Bacteria"/>
</dbReference>
<dbReference type="HOGENOM" id="CLU_038115_2_0_6"/>
<dbReference type="OrthoDB" id="9801867at2"/>
<dbReference type="UniPathway" id="UPA00031">
    <property type="reaction ID" value="UER00006"/>
</dbReference>
<dbReference type="GO" id="GO:0005737">
    <property type="term" value="C:cytoplasm"/>
    <property type="evidence" value="ECO:0007669"/>
    <property type="project" value="UniProtKB-SubCell"/>
</dbReference>
<dbReference type="GO" id="GO:0005524">
    <property type="term" value="F:ATP binding"/>
    <property type="evidence" value="ECO:0007669"/>
    <property type="project" value="UniProtKB-KW"/>
</dbReference>
<dbReference type="GO" id="GO:0003879">
    <property type="term" value="F:ATP phosphoribosyltransferase activity"/>
    <property type="evidence" value="ECO:0007669"/>
    <property type="project" value="UniProtKB-UniRule"/>
</dbReference>
<dbReference type="GO" id="GO:0000105">
    <property type="term" value="P:L-histidine biosynthetic process"/>
    <property type="evidence" value="ECO:0007669"/>
    <property type="project" value="UniProtKB-UniRule"/>
</dbReference>
<dbReference type="CDD" id="cd13595">
    <property type="entry name" value="PBP2_HisGs"/>
    <property type="match status" value="1"/>
</dbReference>
<dbReference type="FunFam" id="3.40.190.10:FF:000011">
    <property type="entry name" value="ATP phosphoribosyltransferase"/>
    <property type="match status" value="1"/>
</dbReference>
<dbReference type="FunFam" id="3.40.190.10:FF:000022">
    <property type="entry name" value="ATP phosphoribosyltransferase"/>
    <property type="match status" value="1"/>
</dbReference>
<dbReference type="Gene3D" id="3.40.190.10">
    <property type="entry name" value="Periplasmic binding protein-like II"/>
    <property type="match status" value="2"/>
</dbReference>
<dbReference type="HAMAP" id="MF_01018">
    <property type="entry name" value="HisG_Short"/>
    <property type="match status" value="1"/>
</dbReference>
<dbReference type="InterPro" id="IPR013820">
    <property type="entry name" value="ATP_PRibTrfase_cat"/>
</dbReference>
<dbReference type="InterPro" id="IPR018198">
    <property type="entry name" value="ATP_PRibTrfase_CS"/>
</dbReference>
<dbReference type="InterPro" id="IPR001348">
    <property type="entry name" value="ATP_PRibTrfase_HisG"/>
</dbReference>
<dbReference type="InterPro" id="IPR024893">
    <property type="entry name" value="ATP_PRibTrfase_HisG_short"/>
</dbReference>
<dbReference type="NCBIfam" id="TIGR00070">
    <property type="entry name" value="hisG"/>
    <property type="match status" value="1"/>
</dbReference>
<dbReference type="PANTHER" id="PTHR21403:SF8">
    <property type="entry name" value="ATP PHOSPHORIBOSYLTRANSFERASE"/>
    <property type="match status" value="1"/>
</dbReference>
<dbReference type="PANTHER" id="PTHR21403">
    <property type="entry name" value="ATP PHOSPHORIBOSYLTRANSFERASE ATP-PRTASE"/>
    <property type="match status" value="1"/>
</dbReference>
<dbReference type="Pfam" id="PF01634">
    <property type="entry name" value="HisG"/>
    <property type="match status" value="1"/>
</dbReference>
<dbReference type="SUPFAM" id="SSF53850">
    <property type="entry name" value="Periplasmic binding protein-like II"/>
    <property type="match status" value="1"/>
</dbReference>
<dbReference type="PROSITE" id="PS01316">
    <property type="entry name" value="ATP_P_PHORIBOSYLTR"/>
    <property type="match status" value="1"/>
</dbReference>
<protein>
    <recommendedName>
        <fullName evidence="1">ATP phosphoribosyltransferase</fullName>
        <shortName evidence="1">ATP-PRT</shortName>
        <shortName evidence="1">ATP-PRTase</shortName>
        <ecNumber evidence="1">2.4.2.17</ecNumber>
    </recommendedName>
</protein>
<evidence type="ECO:0000255" key="1">
    <source>
        <dbReference type="HAMAP-Rule" id="MF_01018"/>
    </source>
</evidence>
<reference key="1">
    <citation type="journal article" date="2009" name="Genome Biol.">
        <title>Genomic and genetic analyses of diversity and plant interactions of Pseudomonas fluorescens.</title>
        <authorList>
            <person name="Silby M.W."/>
            <person name="Cerdeno-Tarraga A.M."/>
            <person name="Vernikos G.S."/>
            <person name="Giddens S.R."/>
            <person name="Jackson R.W."/>
            <person name="Preston G.M."/>
            <person name="Zhang X.-X."/>
            <person name="Moon C.D."/>
            <person name="Gehrig S.M."/>
            <person name="Godfrey S.A.C."/>
            <person name="Knight C.G."/>
            <person name="Malone J.G."/>
            <person name="Robinson Z."/>
            <person name="Spiers A.J."/>
            <person name="Harris S."/>
            <person name="Challis G.L."/>
            <person name="Yaxley A.M."/>
            <person name="Harris D."/>
            <person name="Seeger K."/>
            <person name="Murphy L."/>
            <person name="Rutter S."/>
            <person name="Squares R."/>
            <person name="Quail M.A."/>
            <person name="Saunders E."/>
            <person name="Mavromatis K."/>
            <person name="Brettin T.S."/>
            <person name="Bentley S.D."/>
            <person name="Hothersall J."/>
            <person name="Stephens E."/>
            <person name="Thomas C.M."/>
            <person name="Parkhill J."/>
            <person name="Levy S.B."/>
            <person name="Rainey P.B."/>
            <person name="Thomson N.R."/>
        </authorList>
    </citation>
    <scope>NUCLEOTIDE SEQUENCE [LARGE SCALE GENOMIC DNA]</scope>
    <source>
        <strain>SBW25</strain>
    </source>
</reference>